<proteinExistence type="inferred from homology"/>
<evidence type="ECO:0000255" key="1">
    <source>
        <dbReference type="HAMAP-Rule" id="MF_01659"/>
    </source>
</evidence>
<evidence type="ECO:0000305" key="2"/>
<comment type="function">
    <text evidence="1">Catalyzes the thiamine diphosphate-dependent decarboxylation of 2-oxoglutarate and the subsequent addition of the resulting succinic semialdehyde-thiamine pyrophosphate anion to isochorismate to yield 2-succinyl-5-enolpyruvyl-6-hydroxy-3-cyclohexene-1-carboxylate (SEPHCHC).</text>
</comment>
<comment type="catalytic activity">
    <reaction evidence="1">
        <text>isochorismate + 2-oxoglutarate + H(+) = 5-enolpyruvoyl-6-hydroxy-2-succinyl-cyclohex-3-ene-1-carboxylate + CO2</text>
        <dbReference type="Rhea" id="RHEA:25593"/>
        <dbReference type="ChEBI" id="CHEBI:15378"/>
        <dbReference type="ChEBI" id="CHEBI:16526"/>
        <dbReference type="ChEBI" id="CHEBI:16810"/>
        <dbReference type="ChEBI" id="CHEBI:29780"/>
        <dbReference type="ChEBI" id="CHEBI:58818"/>
        <dbReference type="EC" id="2.2.1.9"/>
    </reaction>
</comment>
<comment type="cofactor">
    <cofactor evidence="1">
        <name>Mg(2+)</name>
        <dbReference type="ChEBI" id="CHEBI:18420"/>
    </cofactor>
    <cofactor evidence="1">
        <name>Mn(2+)</name>
        <dbReference type="ChEBI" id="CHEBI:29035"/>
    </cofactor>
</comment>
<comment type="cofactor">
    <cofactor evidence="1">
        <name>thiamine diphosphate</name>
        <dbReference type="ChEBI" id="CHEBI:58937"/>
    </cofactor>
    <text evidence="1">Binds 1 thiamine pyrophosphate per subunit.</text>
</comment>
<comment type="pathway">
    <text evidence="1">Quinol/quinone metabolism; 1,4-dihydroxy-2-naphthoate biosynthesis; 1,4-dihydroxy-2-naphthoate from chorismate: step 2/7.</text>
</comment>
<comment type="pathway">
    <text evidence="1">Cofactor biosynthesis; phylloquinone biosynthesis.</text>
</comment>
<comment type="subunit">
    <text evidence="1">Homodimer.</text>
</comment>
<comment type="similarity">
    <text evidence="1">Belongs to the TPP enzyme family. MenD subfamily.</text>
</comment>
<comment type="sequence caution" evidence="2">
    <conflict type="erroneous initiation">
        <sequence resource="EMBL-CDS" id="ABM78622"/>
    </conflict>
</comment>
<sequence>MGLRHLVLCPGSRSGPLALAAGGMARTNLLRLSTAIDERSAAFLALGFSTATGTAAAVVTTSGTAVANLLPAAVEADRSCQPLLLLTADRPYRLKDCGANQTVNQETFLSPACRWIGQGPREGLHLFSTETLESFAEEAWQRAHHPAGAVHLNLPFEEPLHLSEEEQRVIWKGWSPKIPRSAPITPTNLAMAAEGTEGVTDRAPFALDPFRPGVVIAGAWRGLSKDLFAFQQSLREWQALSGWPVLADPLSALPSDQPGLIRSWELLLAAGLLGSHEQLQVLRLGPMSASRSLEAWLKSFGDGQLLITEGDSRCLDPLGLSVQWSHGLTTWWQHHHHRWIDADAASQQATQPLLKKWQIIDRFAQDWLDQQLPLQGAITEPALARWLSRLLPAELSIMLAASSPVRDWLAYADKSLFSRRCFSFRGASGIDGTLSLSMGLAMALGPTLLVSGDLALLHDSNGWLLAHPQRPPLVVVLIDNGGGGIFEQLLVKKAPSEAFEQLFAMPQAVDPLVLAAAHNIPHRQVACLEDLPAALEWGLFQTGPVLIRVCTHRGQDSSMRQQLREGLVMHLQSISQNGHIDL</sequence>
<gene>
    <name evidence="1" type="primary">menD</name>
    <name type="ordered locus">P9303_18801</name>
</gene>
<reference key="1">
    <citation type="journal article" date="2007" name="PLoS Genet.">
        <title>Patterns and implications of gene gain and loss in the evolution of Prochlorococcus.</title>
        <authorList>
            <person name="Kettler G.C."/>
            <person name="Martiny A.C."/>
            <person name="Huang K."/>
            <person name="Zucker J."/>
            <person name="Coleman M.L."/>
            <person name="Rodrigue S."/>
            <person name="Chen F."/>
            <person name="Lapidus A."/>
            <person name="Ferriera S."/>
            <person name="Johnson J."/>
            <person name="Steglich C."/>
            <person name="Church G.M."/>
            <person name="Richardson P."/>
            <person name="Chisholm S.W."/>
        </authorList>
    </citation>
    <scope>NUCLEOTIDE SEQUENCE [LARGE SCALE GENOMIC DNA]</scope>
    <source>
        <strain>MIT 9303</strain>
    </source>
</reference>
<keyword id="KW-0460">Magnesium</keyword>
<keyword id="KW-0464">Manganese</keyword>
<keyword id="KW-0479">Metal-binding</keyword>
<keyword id="KW-0786">Thiamine pyrophosphate</keyword>
<keyword id="KW-0808">Transferase</keyword>
<dbReference type="EC" id="2.2.1.9" evidence="1"/>
<dbReference type="EMBL" id="CP000554">
    <property type="protein sequence ID" value="ABM78622.1"/>
    <property type="status" value="ALT_INIT"/>
    <property type="molecule type" value="Genomic_DNA"/>
</dbReference>
<dbReference type="SMR" id="A2CAW2"/>
<dbReference type="STRING" id="59922.P9303_18801"/>
<dbReference type="KEGG" id="pmf:P9303_18801"/>
<dbReference type="HOGENOM" id="CLU_006051_4_0_3"/>
<dbReference type="UniPathway" id="UPA00995"/>
<dbReference type="UniPathway" id="UPA01057">
    <property type="reaction ID" value="UER00164"/>
</dbReference>
<dbReference type="Proteomes" id="UP000002274">
    <property type="component" value="Chromosome"/>
</dbReference>
<dbReference type="GO" id="GO:0070204">
    <property type="term" value="F:2-succinyl-5-enolpyruvyl-6-hydroxy-3-cyclohexene-1-carboxylic-acid synthase activity"/>
    <property type="evidence" value="ECO:0007669"/>
    <property type="project" value="UniProtKB-UniRule"/>
</dbReference>
<dbReference type="GO" id="GO:0000287">
    <property type="term" value="F:magnesium ion binding"/>
    <property type="evidence" value="ECO:0007669"/>
    <property type="project" value="UniProtKB-UniRule"/>
</dbReference>
<dbReference type="GO" id="GO:0030145">
    <property type="term" value="F:manganese ion binding"/>
    <property type="evidence" value="ECO:0007669"/>
    <property type="project" value="UniProtKB-UniRule"/>
</dbReference>
<dbReference type="GO" id="GO:0030976">
    <property type="term" value="F:thiamine pyrophosphate binding"/>
    <property type="evidence" value="ECO:0007669"/>
    <property type="project" value="UniProtKB-UniRule"/>
</dbReference>
<dbReference type="GO" id="GO:0009234">
    <property type="term" value="P:menaquinone biosynthetic process"/>
    <property type="evidence" value="ECO:0007669"/>
    <property type="project" value="InterPro"/>
</dbReference>
<dbReference type="GO" id="GO:0042372">
    <property type="term" value="P:phylloquinone biosynthetic process"/>
    <property type="evidence" value="ECO:0007669"/>
    <property type="project" value="UniProtKB-UniRule"/>
</dbReference>
<dbReference type="CDD" id="cd07037">
    <property type="entry name" value="TPP_PYR_MenD"/>
    <property type="match status" value="1"/>
</dbReference>
<dbReference type="CDD" id="cd02009">
    <property type="entry name" value="TPP_SHCHC_synthase"/>
    <property type="match status" value="1"/>
</dbReference>
<dbReference type="Gene3D" id="3.40.50.970">
    <property type="match status" value="2"/>
</dbReference>
<dbReference type="Gene3D" id="3.40.50.1220">
    <property type="entry name" value="TPP-binding domain"/>
    <property type="match status" value="1"/>
</dbReference>
<dbReference type="HAMAP" id="MF_01659">
    <property type="entry name" value="MenD"/>
    <property type="match status" value="1"/>
</dbReference>
<dbReference type="InterPro" id="IPR004433">
    <property type="entry name" value="MenaQ_synth_MenD"/>
</dbReference>
<dbReference type="InterPro" id="IPR029061">
    <property type="entry name" value="THDP-binding"/>
</dbReference>
<dbReference type="InterPro" id="IPR012001">
    <property type="entry name" value="Thiamin_PyroP_enz_TPP-bd_dom"/>
</dbReference>
<dbReference type="InterPro" id="IPR011766">
    <property type="entry name" value="TPP_enzyme_TPP-bd"/>
</dbReference>
<dbReference type="NCBIfam" id="TIGR00173">
    <property type="entry name" value="menD"/>
    <property type="match status" value="1"/>
</dbReference>
<dbReference type="PANTHER" id="PTHR42916">
    <property type="entry name" value="2-SUCCINYL-5-ENOLPYRUVYL-6-HYDROXY-3-CYCLOHEXENE-1-CARBOXYLATE SYNTHASE"/>
    <property type="match status" value="1"/>
</dbReference>
<dbReference type="PANTHER" id="PTHR42916:SF1">
    <property type="entry name" value="PROTEIN PHYLLO, CHLOROPLASTIC"/>
    <property type="match status" value="1"/>
</dbReference>
<dbReference type="Pfam" id="PF02775">
    <property type="entry name" value="TPP_enzyme_C"/>
    <property type="match status" value="1"/>
</dbReference>
<dbReference type="Pfam" id="PF02776">
    <property type="entry name" value="TPP_enzyme_N"/>
    <property type="match status" value="1"/>
</dbReference>
<dbReference type="PIRSF" id="PIRSF004983">
    <property type="entry name" value="MenD"/>
    <property type="match status" value="1"/>
</dbReference>
<dbReference type="SUPFAM" id="SSF52518">
    <property type="entry name" value="Thiamin diphosphate-binding fold (THDP-binding)"/>
    <property type="match status" value="2"/>
</dbReference>
<organism>
    <name type="scientific">Prochlorococcus marinus (strain MIT 9303)</name>
    <dbReference type="NCBI Taxonomy" id="59922"/>
    <lineage>
        <taxon>Bacteria</taxon>
        <taxon>Bacillati</taxon>
        <taxon>Cyanobacteriota</taxon>
        <taxon>Cyanophyceae</taxon>
        <taxon>Synechococcales</taxon>
        <taxon>Prochlorococcaceae</taxon>
        <taxon>Prochlorococcus</taxon>
    </lineage>
</organism>
<name>MEND_PROM3</name>
<accession>A2CAW2</accession>
<protein>
    <recommendedName>
        <fullName evidence="1">2-succinyl-5-enolpyruvyl-6-hydroxy-3-cyclohexene-1-carboxylate synthase</fullName>
        <shortName evidence="1">SEPHCHC synthase</shortName>
        <ecNumber evidence="1">2.2.1.9</ecNumber>
    </recommendedName>
</protein>
<feature type="chain" id="PRO_0000341802" description="2-succinyl-5-enolpyruvyl-6-hydroxy-3-cyclohexene-1-carboxylate synthase">
    <location>
        <begin position="1"/>
        <end position="582"/>
    </location>
</feature>